<reference key="1">
    <citation type="submission" date="2007-08" db="EMBL/GenBank/DDBJ databases">
        <authorList>
            <consortium name="The Citrobacter koseri Genome Sequencing Project"/>
            <person name="McClelland M."/>
            <person name="Sanderson E.K."/>
            <person name="Porwollik S."/>
            <person name="Spieth J."/>
            <person name="Clifton W.S."/>
            <person name="Latreille P."/>
            <person name="Courtney L."/>
            <person name="Wang C."/>
            <person name="Pepin K."/>
            <person name="Bhonagiri V."/>
            <person name="Nash W."/>
            <person name="Johnson M."/>
            <person name="Thiruvilangam P."/>
            <person name="Wilson R."/>
        </authorList>
    </citation>
    <scope>NUCLEOTIDE SEQUENCE [LARGE SCALE GENOMIC DNA]</scope>
    <source>
        <strain>ATCC BAA-895 / CDC 4225-83 / SGSC4696</strain>
    </source>
</reference>
<proteinExistence type="inferred from homology"/>
<comment type="subcellular location">
    <subcellularLocation>
        <location evidence="1">Cell inner membrane</location>
        <topology evidence="1">Multi-pass membrane protein</topology>
    </subcellularLocation>
</comment>
<comment type="similarity">
    <text evidence="1">Belongs to the major facilitator superfamily. TsgA family.</text>
</comment>
<evidence type="ECO:0000255" key="1">
    <source>
        <dbReference type="HAMAP-Rule" id="MF_01044"/>
    </source>
</evidence>
<dbReference type="EMBL" id="CP000822">
    <property type="protein sequence ID" value="ABV15831.1"/>
    <property type="molecule type" value="Genomic_DNA"/>
</dbReference>
<dbReference type="RefSeq" id="WP_012135472.1">
    <property type="nucleotide sequence ID" value="NC_009792.1"/>
</dbReference>
<dbReference type="SMR" id="A8AQR8"/>
<dbReference type="STRING" id="290338.CKO_04786"/>
<dbReference type="GeneID" id="45138292"/>
<dbReference type="KEGG" id="cko:CKO_04786"/>
<dbReference type="HOGENOM" id="CLU_056916_0_0_6"/>
<dbReference type="OrthoDB" id="8577032at2"/>
<dbReference type="Proteomes" id="UP000008148">
    <property type="component" value="Chromosome"/>
</dbReference>
<dbReference type="GO" id="GO:0005886">
    <property type="term" value="C:plasma membrane"/>
    <property type="evidence" value="ECO:0007669"/>
    <property type="project" value="UniProtKB-SubCell"/>
</dbReference>
<dbReference type="GO" id="GO:0022857">
    <property type="term" value="F:transmembrane transporter activity"/>
    <property type="evidence" value="ECO:0007669"/>
    <property type="project" value="InterPro"/>
</dbReference>
<dbReference type="CDD" id="cd17333">
    <property type="entry name" value="MFS_FucP_MFSD4_like"/>
    <property type="match status" value="1"/>
</dbReference>
<dbReference type="FunFam" id="1.20.1250.20:FF:000032">
    <property type="entry name" value="Protein TsgA"/>
    <property type="match status" value="1"/>
</dbReference>
<dbReference type="FunFam" id="1.20.1250.20:FF:000052">
    <property type="entry name" value="Protein TsgA"/>
    <property type="match status" value="1"/>
</dbReference>
<dbReference type="Gene3D" id="1.20.1250.20">
    <property type="entry name" value="MFS general substrate transporter like domains"/>
    <property type="match status" value="2"/>
</dbReference>
<dbReference type="HAMAP" id="MF_01044">
    <property type="entry name" value="MFS_TsgA"/>
    <property type="match status" value="1"/>
</dbReference>
<dbReference type="InterPro" id="IPR011701">
    <property type="entry name" value="MFS"/>
</dbReference>
<dbReference type="InterPro" id="IPR020846">
    <property type="entry name" value="MFS_dom"/>
</dbReference>
<dbReference type="InterPro" id="IPR036259">
    <property type="entry name" value="MFS_trans_sf"/>
</dbReference>
<dbReference type="InterPro" id="IPR023528">
    <property type="entry name" value="MFS_TsgA"/>
</dbReference>
<dbReference type="InterPro" id="IPR050375">
    <property type="entry name" value="MFS_TsgA-like"/>
</dbReference>
<dbReference type="NCBIfam" id="NF002982">
    <property type="entry name" value="PRK03699.1"/>
    <property type="match status" value="1"/>
</dbReference>
<dbReference type="PANTHER" id="PTHR43702">
    <property type="entry name" value="L-FUCOSE-PROTON SYMPORTER"/>
    <property type="match status" value="1"/>
</dbReference>
<dbReference type="PANTHER" id="PTHR43702:SF3">
    <property type="entry name" value="PROTEIN TSGA"/>
    <property type="match status" value="1"/>
</dbReference>
<dbReference type="Pfam" id="PF07690">
    <property type="entry name" value="MFS_1"/>
    <property type="match status" value="1"/>
</dbReference>
<dbReference type="SUPFAM" id="SSF103473">
    <property type="entry name" value="MFS general substrate transporter"/>
    <property type="match status" value="1"/>
</dbReference>
<dbReference type="PROSITE" id="PS50850">
    <property type="entry name" value="MFS"/>
    <property type="match status" value="1"/>
</dbReference>
<gene>
    <name evidence="1" type="primary">tsgA</name>
    <name type="ordered locus">CKO_04786</name>
</gene>
<sequence>MTNSNRIKLTWISFLSYALTGALVIVTGMVMGNIAEYFNLPVSSMSNTFTFLNAGILISIFLNAWLMEIIPLKTQLRFGFVLMVLAVAGLMLSHSLALFSAAMFVLGLVSGITMSIGTFLITQMYEGRQRGSRLLFTDSFFSMAGMIFPMVAAYLLARSIEWYWVYACIGLVYVAIFILTFGCEFPALGKHAPKTETPVVKEKWGIGVLFLSIAALCYILGQLGFISWVPEYAKGLGMSLNDAGTLVSDFWMSYMFGMWAFSFILRFFDLQRILTVLAGLAAVLMYLFIKAQPEHMAWFILTLGFFSSAIYTSIITLGSQQTKVPSPKLVNFVLTCGTIGTMLTFVVTGPIVAHSGPQAALLTANGLYAVVFVMCFILGFVTRHRQHNVPAAH</sequence>
<organism>
    <name type="scientific">Citrobacter koseri (strain ATCC BAA-895 / CDC 4225-83 / SGSC4696)</name>
    <dbReference type="NCBI Taxonomy" id="290338"/>
    <lineage>
        <taxon>Bacteria</taxon>
        <taxon>Pseudomonadati</taxon>
        <taxon>Pseudomonadota</taxon>
        <taxon>Gammaproteobacteria</taxon>
        <taxon>Enterobacterales</taxon>
        <taxon>Enterobacteriaceae</taxon>
        <taxon>Citrobacter</taxon>
    </lineage>
</organism>
<protein>
    <recommendedName>
        <fullName evidence="1">Protein TsgA homolog</fullName>
    </recommendedName>
</protein>
<feature type="chain" id="PRO_1000064244" description="Protein TsgA homolog">
    <location>
        <begin position="1"/>
        <end position="393"/>
    </location>
</feature>
<feature type="transmembrane region" description="Helical" evidence="1">
    <location>
        <begin position="11"/>
        <end position="31"/>
    </location>
</feature>
<feature type="transmembrane region" description="Helical" evidence="1">
    <location>
        <begin position="51"/>
        <end position="71"/>
    </location>
</feature>
<feature type="transmembrane region" description="Helical" evidence="1">
    <location>
        <begin position="78"/>
        <end position="98"/>
    </location>
</feature>
<feature type="transmembrane region" description="Helical" evidence="1">
    <location>
        <begin position="101"/>
        <end position="121"/>
    </location>
</feature>
<feature type="transmembrane region" description="Helical" evidence="1">
    <location>
        <begin position="134"/>
        <end position="154"/>
    </location>
</feature>
<feature type="transmembrane region" description="Helical" evidence="1">
    <location>
        <begin position="162"/>
        <end position="182"/>
    </location>
</feature>
<feature type="transmembrane region" description="Helical" evidence="1">
    <location>
        <begin position="206"/>
        <end position="226"/>
    </location>
</feature>
<feature type="transmembrane region" description="Helical" evidence="1">
    <location>
        <begin position="245"/>
        <end position="265"/>
    </location>
</feature>
<feature type="transmembrane region" description="Helical" evidence="1">
    <location>
        <begin position="273"/>
        <end position="293"/>
    </location>
</feature>
<feature type="transmembrane region" description="Helical" evidence="1">
    <location>
        <begin position="297"/>
        <end position="317"/>
    </location>
</feature>
<feature type="transmembrane region" description="Helical" evidence="1">
    <location>
        <begin position="332"/>
        <end position="352"/>
    </location>
</feature>
<feature type="transmembrane region" description="Helical" evidence="1">
    <location>
        <begin position="361"/>
        <end position="381"/>
    </location>
</feature>
<keyword id="KW-0997">Cell inner membrane</keyword>
<keyword id="KW-1003">Cell membrane</keyword>
<keyword id="KW-0472">Membrane</keyword>
<keyword id="KW-1185">Reference proteome</keyword>
<keyword id="KW-0812">Transmembrane</keyword>
<keyword id="KW-1133">Transmembrane helix</keyword>
<name>TSGA_CITK8</name>
<accession>A8AQR8</accession>